<comment type="function">
    <text evidence="3 4">Functional viral IL-10 homolog. Can bind to the human IL-10 receptor and compete with human IL-10 for binding sites. Requires both subunits of the human IL-10 receptor complex to induce signal transduction events and biological activities. IL-10 signaling pathway has several immunosuppressive activities that are exploited by the virus. Inhibits TLR-induced type I interferon production in host plasmacytoid dendritic cells.</text>
</comment>
<comment type="subunit">
    <text evidence="2">Homodimer; disulfide-linked.</text>
</comment>
<comment type="interaction">
    <interactant intactId="EBI-1033736">
        <id>P17150</id>
    </interactant>
    <interactant intactId="EBI-1031656">
        <id>Q13651</id>
        <label>IL10RA</label>
    </interactant>
    <organismsDiffer>true</organismsDiffer>
    <experiments>2</experiments>
</comment>
<comment type="subcellular location">
    <subcellularLocation>
        <location evidence="5">Secreted</location>
    </subcellularLocation>
</comment>
<comment type="similarity">
    <text evidence="5">Belongs to the IL-10 family.</text>
</comment>
<comment type="sequence caution" evidence="5">
    <conflict type="erroneous gene model prediction">
        <sequence resource="EMBL-CDS" id="CAA35350"/>
    </conflict>
</comment>
<protein>
    <recommendedName>
        <fullName>Viral interleukin-10 homolog</fullName>
        <shortName>cmvIL-10</shortName>
        <shortName>vIL-10</shortName>
    </recommendedName>
</protein>
<feature type="signal peptide" evidence="1">
    <location>
        <begin position="1"/>
        <end position="19"/>
    </location>
</feature>
<feature type="chain" id="PRO_0000015378" description="Viral interleukin-10 homolog">
    <location>
        <begin position="20"/>
        <end position="175"/>
    </location>
</feature>
<feature type="glycosylation site" description="N-linked (GlcNAc...) asparagine; by host" evidence="1">
    <location>
        <position position="151"/>
    </location>
</feature>
<feature type="disulfide bond" evidence="2">
    <location>
        <begin position="37"/>
        <end position="127"/>
    </location>
</feature>
<feature type="disulfide bond" description="Interchain" evidence="2">
    <location>
        <position position="78"/>
    </location>
</feature>
<feature type="disulfide bond" evidence="2">
    <location>
        <begin position="81"/>
        <end position="132"/>
    </location>
</feature>
<feature type="helix" evidence="6">
    <location>
        <begin position="35"/>
        <end position="37"/>
    </location>
</feature>
<feature type="helix" evidence="6">
    <location>
        <begin position="39"/>
        <end position="42"/>
    </location>
</feature>
<feature type="helix" evidence="6">
    <location>
        <begin position="43"/>
        <end position="60"/>
    </location>
</feature>
<feature type="helix" evidence="6">
    <location>
        <begin position="80"/>
        <end position="93"/>
    </location>
</feature>
<feature type="helix" evidence="6">
    <location>
        <begin position="95"/>
        <end position="102"/>
    </location>
</feature>
<feature type="helix" evidence="6">
    <location>
        <begin position="104"/>
        <end position="106"/>
    </location>
</feature>
<feature type="helix" evidence="6">
    <location>
        <begin position="107"/>
        <end position="124"/>
    </location>
</feature>
<feature type="helix" evidence="6">
    <location>
        <begin position="128"/>
        <end position="130"/>
    </location>
</feature>
<feature type="helix" evidence="6">
    <location>
        <begin position="134"/>
        <end position="144"/>
    </location>
</feature>
<feature type="turn" evidence="6">
    <location>
        <begin position="149"/>
        <end position="152"/>
    </location>
</feature>
<feature type="helix" evidence="6">
    <location>
        <begin position="153"/>
        <end position="158"/>
    </location>
</feature>
<feature type="helix" evidence="6">
    <location>
        <begin position="160"/>
        <end position="173"/>
    </location>
</feature>
<gene>
    <name type="primary">UL111A</name>
</gene>
<sequence length="175" mass="20007">MLSVMVSSSLVLIVFFLGASEEAKPATTTIKNTKPQCRPEDYATRLQDLRVTFHRVKPTLQREDDYSVWLDGTVVKGCWGCSVMDWLLRRYLEIVFPAGDHVYPGLKTELHSMRSTLESIYKDMRQCPLLGCGDKSVISRLSQEAERKSDNGTRKGLSELDTLFSRLEEYLHSRK</sequence>
<reference key="1">
    <citation type="journal article" date="1990" name="Curr. Top. Microbiol. Immunol.">
        <title>Analysis of the protein-coding content of the sequence of human cytomegalovirus strain AD169.</title>
        <authorList>
            <person name="Chee M.S."/>
            <person name="Bankier A.T."/>
            <person name="Beck S."/>
            <person name="Bohni R."/>
            <person name="Brown C.M."/>
            <person name="Cerny R."/>
            <person name="Horsnell T."/>
            <person name="Hutchison C.A. III"/>
            <person name="Kouzarides T."/>
            <person name="Martignetti J.A."/>
            <person name="Preddie E."/>
            <person name="Satchwell S.C."/>
            <person name="Tomlinson P."/>
            <person name="Weston K.M."/>
            <person name="Barrell B.G."/>
        </authorList>
    </citation>
    <scope>NUCLEOTIDE SEQUENCE [LARGE SCALE GENOMIC DNA]</scope>
</reference>
<reference key="2">
    <citation type="journal article" date="2000" name="Proc. Natl. Acad. Sci. U.S.A.">
        <title>Human cytomegalovirus harbors its own unique interleukin-10 homolog (cmvIL-10).</title>
        <authorList>
            <person name="Kotenko S.V."/>
            <person name="Saccani S."/>
            <person name="Izotova L.S."/>
            <person name="Mirochnitchenko O.V."/>
            <person name="Pestka S."/>
        </authorList>
    </citation>
    <scope>NUCLEOTIDE SEQUENCE [MRNA]</scope>
</reference>
<reference key="3">
    <citation type="journal article" date="2003" name="J. Gen. Virol.">
        <title>The human cytomegalovirus genome revisited: comparison with the chimpanzee cytomegalovirus genome.</title>
        <authorList>
            <person name="Davison A.J."/>
            <person name="Dolan A."/>
            <person name="Akter P."/>
            <person name="Addison C."/>
            <person name="Dargan D.J."/>
            <person name="Alcendor D.J."/>
            <person name="McGeoch D.J."/>
            <person name="Hayward G.S."/>
        </authorList>
    </citation>
    <scope>GENOME REANNOTATION</scope>
</reference>
<reference key="4">
    <citation type="journal article" date="2003" name="J. Gen. Virol.">
        <authorList>
            <person name="Davison A.J."/>
            <person name="Dolan A."/>
            <person name="Akter P."/>
            <person name="Addison C."/>
            <person name="Dargan D.J."/>
            <person name="Alcendor D.J."/>
            <person name="McGeoch D.J."/>
            <person name="Hayward G.S."/>
        </authorList>
    </citation>
    <scope>ERRATUM OF PUBMED:12533697</scope>
</reference>
<reference key="5">
    <citation type="journal article" date="2004" name="J. Virol.">
        <title>Human cytomegalovirus-encoded interleukin-10 homolog inhibits maturation of dendritic cells and alters their functionality.</title>
        <authorList>
            <person name="Chang W.L."/>
            <person name="Baumgarth N."/>
            <person name="Yu D."/>
            <person name="Barry P.A."/>
        </authorList>
    </citation>
    <scope>FUNCTION</scope>
</reference>
<reference key="6">
    <citation type="journal article" date="2009" name="Virology">
        <title>Human cytomegalovirus suppresses type I interferon secretion by plasmacytoid dendritic cells through its interleukin 10 homolog.</title>
        <authorList>
            <person name="Chang W.L."/>
            <person name="Barry P.A."/>
            <person name="Szubin R."/>
            <person name="Wang D."/>
            <person name="Baumgarth N."/>
        </authorList>
    </citation>
    <scope>FUNCTION</scope>
</reference>
<reference key="7">
    <citation type="journal article" date="2002" name="Proc. Natl. Acad. Sci. U.S.A.">
        <title>Crystal structure of human cytomegalovirus IL-10 bound to soluble human IL-10R1.</title>
        <authorList>
            <person name="Jones B.C."/>
            <person name="Logsdon N.J."/>
            <person name="Josephson K."/>
            <person name="Cook J."/>
            <person name="Barry P.A."/>
            <person name="Walter M.R."/>
        </authorList>
    </citation>
    <scope>X-RAY CRYSTALLOGRAPHY (2.7 ANGSTROMS) OF 20-175 IN COMPLEX WITH HUMAN IL10R1</scope>
    <scope>DISULFIDE BONDS</scope>
</reference>
<accession>P17150</accession>
<accession>Q7M6T2</accession>
<accession>Q9J7C4</accession>
<name>IL10H_HCMVA</name>
<organism>
    <name type="scientific">Human cytomegalovirus (strain AD169)</name>
    <name type="common">HHV-5</name>
    <name type="synonym">Human herpesvirus 5</name>
    <dbReference type="NCBI Taxonomy" id="10360"/>
    <lineage>
        <taxon>Viruses</taxon>
        <taxon>Duplodnaviria</taxon>
        <taxon>Heunggongvirae</taxon>
        <taxon>Peploviricota</taxon>
        <taxon>Herviviricetes</taxon>
        <taxon>Herpesvirales</taxon>
        <taxon>Orthoherpesviridae</taxon>
        <taxon>Betaherpesvirinae</taxon>
        <taxon>Cytomegalovirus</taxon>
        <taxon>Cytomegalovirus humanbeta5</taxon>
        <taxon>Human cytomegalovirus</taxon>
    </lineage>
</organism>
<dbReference type="EMBL" id="X17403">
    <property type="protein sequence ID" value="CAA35350.1"/>
    <property type="status" value="ALT_SEQ"/>
    <property type="molecule type" value="Genomic_DNA"/>
</dbReference>
<dbReference type="EMBL" id="AF182315">
    <property type="protein sequence ID" value="AAF36285.1"/>
    <property type="molecule type" value="mRNA"/>
</dbReference>
<dbReference type="EMBL" id="BK000394">
    <property type="protein sequence ID" value="DAA00102.1"/>
    <property type="molecule type" value="Genomic_DNA"/>
</dbReference>
<dbReference type="PIR" id="S09878">
    <property type="entry name" value="S09878"/>
</dbReference>
<dbReference type="PDB" id="1LQS">
    <property type="method" value="X-ray"/>
    <property type="resolution" value="2.70 A"/>
    <property type="chains" value="L/M=20-167"/>
</dbReference>
<dbReference type="PDBsum" id="1LQS"/>
<dbReference type="SMR" id="P17150"/>
<dbReference type="DIP" id="DIP-36823N"/>
<dbReference type="IntAct" id="P17150">
    <property type="interactions" value="1"/>
</dbReference>
<dbReference type="GlyCosmos" id="P17150">
    <property type="glycosylation" value="1 site, No reported glycans"/>
</dbReference>
<dbReference type="EvolutionaryTrace" id="P17150"/>
<dbReference type="Proteomes" id="UP000008991">
    <property type="component" value="Segment"/>
</dbReference>
<dbReference type="Proteomes" id="UP000008992">
    <property type="component" value="Segment"/>
</dbReference>
<dbReference type="GO" id="GO:0005615">
    <property type="term" value="C:extracellular space"/>
    <property type="evidence" value="ECO:0007669"/>
    <property type="project" value="UniProtKB-KW"/>
</dbReference>
<dbReference type="GO" id="GO:0005125">
    <property type="term" value="F:cytokine activity"/>
    <property type="evidence" value="ECO:0007669"/>
    <property type="project" value="UniProtKB-KW"/>
</dbReference>
<dbReference type="GO" id="GO:0006955">
    <property type="term" value="P:immune response"/>
    <property type="evidence" value="ECO:0007669"/>
    <property type="project" value="InterPro"/>
</dbReference>
<dbReference type="GO" id="GO:0039673">
    <property type="term" value="P:symbiont-mediated suppression of host dendritic cell mediated immune response"/>
    <property type="evidence" value="ECO:0007669"/>
    <property type="project" value="UniProtKB-KW"/>
</dbReference>
<dbReference type="GO" id="GO:0052170">
    <property type="term" value="P:symbiont-mediated suppression of host innate immune response"/>
    <property type="evidence" value="ECO:0007669"/>
    <property type="project" value="UniProtKB-KW"/>
</dbReference>
<dbReference type="GO" id="GO:0039502">
    <property type="term" value="P:symbiont-mediated suppression of host type I interferon-mediated signaling pathway"/>
    <property type="evidence" value="ECO:0007669"/>
    <property type="project" value="UniProtKB-KW"/>
</dbReference>
<dbReference type="Gene3D" id="1.20.1250.10">
    <property type="match status" value="1"/>
</dbReference>
<dbReference type="Gene3D" id="4.10.340.10">
    <property type="entry name" value="Interleukin-10, domain 2"/>
    <property type="match status" value="1"/>
</dbReference>
<dbReference type="InterPro" id="IPR009079">
    <property type="entry name" value="4_helix_cytokine-like_core"/>
</dbReference>
<dbReference type="InterPro" id="IPR020443">
    <property type="entry name" value="IL-10/19/20/24/26"/>
</dbReference>
<dbReference type="InterPro" id="IPR012352">
    <property type="entry name" value="IL-10_add_hlx"/>
</dbReference>
<dbReference type="InterPro" id="IPR020423">
    <property type="entry name" value="IL-10_CS"/>
</dbReference>
<dbReference type="PANTHER" id="PTHR48482:SF5">
    <property type="entry name" value="INTERLEUKIN-10"/>
    <property type="match status" value="1"/>
</dbReference>
<dbReference type="PANTHER" id="PTHR48482">
    <property type="entry name" value="INTERLEUKIN-19-RELATED"/>
    <property type="match status" value="1"/>
</dbReference>
<dbReference type="Pfam" id="PF00726">
    <property type="entry name" value="IL10"/>
    <property type="match status" value="1"/>
</dbReference>
<dbReference type="SMART" id="SM00188">
    <property type="entry name" value="IL10"/>
    <property type="match status" value="1"/>
</dbReference>
<dbReference type="SUPFAM" id="SSF47266">
    <property type="entry name" value="4-helical cytokines"/>
    <property type="match status" value="1"/>
</dbReference>
<dbReference type="PROSITE" id="PS00520">
    <property type="entry name" value="INTERLEUKIN_10"/>
    <property type="match status" value="1"/>
</dbReference>
<keyword id="KW-0002">3D-structure</keyword>
<keyword id="KW-0202">Cytokine</keyword>
<keyword id="KW-1015">Disulfide bond</keyword>
<keyword id="KW-1125">Evasion of host immunity by viral interleukin-like protein</keyword>
<keyword id="KW-0325">Glycoprotein</keyword>
<keyword id="KW-0945">Host-virus interaction</keyword>
<keyword id="KW-1090">Inhibition of host innate immune response by virus</keyword>
<keyword id="KW-1114">Inhibition of host interferon signaling pathway by virus</keyword>
<keyword id="KW-0922">Interferon antiviral system evasion</keyword>
<keyword id="KW-1118">Modulation of host dendritic cell activity by virus</keyword>
<keyword id="KW-1185">Reference proteome</keyword>
<keyword id="KW-0964">Secreted</keyword>
<keyword id="KW-0732">Signal</keyword>
<keyword id="KW-0899">Viral immunoevasion</keyword>
<proteinExistence type="evidence at protein level"/>
<organismHost>
    <name type="scientific">Homo sapiens</name>
    <name type="common">Human</name>
    <dbReference type="NCBI Taxonomy" id="9606"/>
</organismHost>
<evidence type="ECO:0000255" key="1"/>
<evidence type="ECO:0000269" key="2">
    <source>
    </source>
</evidence>
<evidence type="ECO:0000269" key="3">
    <source>
    </source>
</evidence>
<evidence type="ECO:0000269" key="4">
    <source>
    </source>
</evidence>
<evidence type="ECO:0000305" key="5"/>
<evidence type="ECO:0007829" key="6">
    <source>
        <dbReference type="PDB" id="1LQS"/>
    </source>
</evidence>